<comment type="subunit">
    <text evidence="3">The cyanobacterial PSI reaction center is composed of one copy each of PsaA,B,C,D,E,F,I,J,K,L,M and X, and forms dimeric and tetrameric complexes.</text>
</comment>
<comment type="subcellular location">
    <subcellularLocation>
        <location evidence="3">Cellular thylakoid membrane</location>
        <topology evidence="1">Multi-pass membrane protein</topology>
    </subcellularLocation>
</comment>
<comment type="PTM">
    <text evidence="3">Two stable N-terminal degradation products have been sequenced at the protein level.</text>
</comment>
<comment type="similarity">
    <text evidence="4">Belongs to the PsaL family.</text>
</comment>
<evidence type="ECO:0000250" key="1"/>
<evidence type="ECO:0000255" key="2"/>
<evidence type="ECO:0000269" key="3">
    <source>
    </source>
</evidence>
<evidence type="ECO:0000305" key="4"/>
<evidence type="ECO:0007829" key="5">
    <source>
        <dbReference type="PDB" id="6K61"/>
    </source>
</evidence>
<sequence length="172" mass="18119">MAQAVDASKNLPSDPRNREVVFPAGRDPQWGNLETPVNASPLVKWFINNLPAYRPGLTPFRRGLEVGMAHGYFLFGPFAKLGPLRDAANANLAGLLGAIGLVVLFTLALSLYANSNPPTALASVTVPNPPDAFQSKEGWNNFASAFLIGGIGGAVVAYFLTSNLALIQGLVG</sequence>
<name>PSAL_NOSS1</name>
<gene>
    <name type="primary">psaL</name>
    <name type="ordered locus">all0107</name>
</gene>
<dbReference type="EMBL" id="BA000019">
    <property type="protein sequence ID" value="BAB77631.1"/>
    <property type="molecule type" value="Genomic_DNA"/>
</dbReference>
<dbReference type="PIR" id="AC1820">
    <property type="entry name" value="AC1820"/>
</dbReference>
<dbReference type="RefSeq" id="WP_010994284.1">
    <property type="nucleotide sequence ID" value="NZ_RSCN01000016.1"/>
</dbReference>
<dbReference type="PDB" id="6JEO">
    <property type="method" value="EM"/>
    <property type="resolution" value="3.30 A"/>
    <property type="chains" value="aL/bL/cL/dL=1-172"/>
</dbReference>
<dbReference type="PDB" id="6K61">
    <property type="method" value="EM"/>
    <property type="resolution" value="2.37 A"/>
    <property type="chains" value="L/l=1-172"/>
</dbReference>
<dbReference type="PDBsum" id="6JEO"/>
<dbReference type="PDBsum" id="6K61"/>
<dbReference type="EMDB" id="EMD-10461"/>
<dbReference type="EMDB" id="EMD-9807"/>
<dbReference type="EMDB" id="EMD-9918"/>
<dbReference type="SMR" id="P58577"/>
<dbReference type="STRING" id="103690.gene:10492111"/>
<dbReference type="KEGG" id="ana:all0107"/>
<dbReference type="eggNOG" id="ENOG502ZMJ2">
    <property type="taxonomic scope" value="Bacteria"/>
</dbReference>
<dbReference type="OrthoDB" id="464381at2"/>
<dbReference type="Proteomes" id="UP000002483">
    <property type="component" value="Chromosome"/>
</dbReference>
<dbReference type="GO" id="GO:0009538">
    <property type="term" value="C:photosystem I reaction center"/>
    <property type="evidence" value="ECO:0007669"/>
    <property type="project" value="InterPro"/>
</dbReference>
<dbReference type="GO" id="GO:0031676">
    <property type="term" value="C:plasma membrane-derived thylakoid membrane"/>
    <property type="evidence" value="ECO:0007669"/>
    <property type="project" value="UniProtKB-SubCell"/>
</dbReference>
<dbReference type="GO" id="GO:0015979">
    <property type="term" value="P:photosynthesis"/>
    <property type="evidence" value="ECO:0007669"/>
    <property type="project" value="UniProtKB-UniRule"/>
</dbReference>
<dbReference type="Gene3D" id="1.20.1240.10">
    <property type="entry name" value="Photosystem I PsaL, reaction centre subunit XI"/>
    <property type="match status" value="1"/>
</dbReference>
<dbReference type="HAMAP" id="MF_00447">
    <property type="entry name" value="PSI_PsaL"/>
    <property type="match status" value="1"/>
</dbReference>
<dbReference type="InterPro" id="IPR003757">
    <property type="entry name" value="PSI_PsaL"/>
</dbReference>
<dbReference type="InterPro" id="IPR036592">
    <property type="entry name" value="PSI_PsaL_sf"/>
</dbReference>
<dbReference type="InterPro" id="IPR022980">
    <property type="entry name" value="PSI_suXI"/>
</dbReference>
<dbReference type="NCBIfam" id="NF001927">
    <property type="entry name" value="PRK00704.1-4"/>
    <property type="match status" value="1"/>
</dbReference>
<dbReference type="PANTHER" id="PTHR34803">
    <property type="entry name" value="PHOTOSYSTEM I REACTION CENTER SUBUNIT XI, CHLOROPLASTIC"/>
    <property type="match status" value="1"/>
</dbReference>
<dbReference type="PANTHER" id="PTHR34803:SF2">
    <property type="entry name" value="PHOTOSYSTEM I REACTION CENTER SUBUNIT XI, CHLOROPLASTIC"/>
    <property type="match status" value="1"/>
</dbReference>
<dbReference type="Pfam" id="PF02605">
    <property type="entry name" value="PsaL"/>
    <property type="match status" value="1"/>
</dbReference>
<dbReference type="SUPFAM" id="SSF81568">
    <property type="entry name" value="Photosystem I reaction center subunit XI, PsaL"/>
    <property type="match status" value="1"/>
</dbReference>
<feature type="initiator methionine" description="Removed" evidence="3">
    <location>
        <position position="1"/>
    </location>
</feature>
<feature type="chain" id="PRO_0000194694" description="Photosystem I reaction center subunit XI">
    <location>
        <begin position="2"/>
        <end position="172"/>
    </location>
</feature>
<feature type="transmembrane region" description="Helical" evidence="2">
    <location>
        <begin position="92"/>
        <end position="112"/>
    </location>
</feature>
<feature type="transmembrane region" description="Helical" evidence="2">
    <location>
        <begin position="142"/>
        <end position="162"/>
    </location>
</feature>
<feature type="helix" evidence="5">
    <location>
        <begin position="24"/>
        <end position="26"/>
    </location>
</feature>
<feature type="helix" evidence="5">
    <location>
        <begin position="36"/>
        <end position="39"/>
    </location>
</feature>
<feature type="helix" evidence="5">
    <location>
        <begin position="41"/>
        <end position="49"/>
    </location>
</feature>
<feature type="turn" evidence="5">
    <location>
        <begin position="51"/>
        <end position="53"/>
    </location>
</feature>
<feature type="helix" evidence="5">
    <location>
        <begin position="59"/>
        <end position="81"/>
    </location>
</feature>
<feature type="turn" evidence="5">
    <location>
        <begin position="83"/>
        <end position="86"/>
    </location>
</feature>
<feature type="helix" evidence="5">
    <location>
        <begin position="90"/>
        <end position="113"/>
    </location>
</feature>
<feature type="helix" evidence="5">
    <location>
        <begin position="131"/>
        <end position="134"/>
    </location>
</feature>
<feature type="helix" evidence="5">
    <location>
        <begin position="136"/>
        <end position="162"/>
    </location>
</feature>
<feature type="helix" evidence="5">
    <location>
        <begin position="164"/>
        <end position="170"/>
    </location>
</feature>
<protein>
    <recommendedName>
        <fullName>Photosystem I reaction center subunit XI</fullName>
    </recommendedName>
    <alternativeName>
        <fullName>PSI subunit V</fullName>
    </alternativeName>
    <alternativeName>
        <fullName>PSI-L</fullName>
    </alternativeName>
</protein>
<keyword id="KW-0002">3D-structure</keyword>
<keyword id="KW-0903">Direct protein sequencing</keyword>
<keyword id="KW-0472">Membrane</keyword>
<keyword id="KW-0602">Photosynthesis</keyword>
<keyword id="KW-0603">Photosystem I</keyword>
<keyword id="KW-1185">Reference proteome</keyword>
<keyword id="KW-0793">Thylakoid</keyword>
<keyword id="KW-0812">Transmembrane</keyword>
<keyword id="KW-1133">Transmembrane helix</keyword>
<organism>
    <name type="scientific">Nostoc sp. (strain PCC 7120 / SAG 25.82 / UTEX 2576)</name>
    <dbReference type="NCBI Taxonomy" id="103690"/>
    <lineage>
        <taxon>Bacteria</taxon>
        <taxon>Bacillati</taxon>
        <taxon>Cyanobacteriota</taxon>
        <taxon>Cyanophyceae</taxon>
        <taxon>Nostocales</taxon>
        <taxon>Nostocaceae</taxon>
        <taxon>Nostoc</taxon>
    </lineage>
</organism>
<reference key="1">
    <citation type="journal article" date="2001" name="DNA Res.">
        <title>Complete genomic sequence of the filamentous nitrogen-fixing cyanobacterium Anabaena sp. strain PCC 7120.</title>
        <authorList>
            <person name="Kaneko T."/>
            <person name="Nakamura Y."/>
            <person name="Wolk C.P."/>
            <person name="Kuritz T."/>
            <person name="Sasamoto S."/>
            <person name="Watanabe A."/>
            <person name="Iriguchi M."/>
            <person name="Ishikawa A."/>
            <person name="Kawashima K."/>
            <person name="Kimura T."/>
            <person name="Kishida Y."/>
            <person name="Kohara M."/>
            <person name="Matsumoto M."/>
            <person name="Matsuno A."/>
            <person name="Muraki A."/>
            <person name="Nakazaki N."/>
            <person name="Shimpo S."/>
            <person name="Sugimoto M."/>
            <person name="Takazawa M."/>
            <person name="Yamada M."/>
            <person name="Yasuda M."/>
            <person name="Tabata S."/>
        </authorList>
    </citation>
    <scope>NUCLEOTIDE SEQUENCE [LARGE SCALE GENOMIC DNA]</scope>
    <source>
        <strain>PCC 7120 / SAG 25.82 / UTEX 2576</strain>
    </source>
</reference>
<reference key="2">
    <citation type="journal article" date="2014" name="Proc. Natl. Acad. Sci. U.S.A.">
        <title>Attachment of phycobilisomes in an antenna-photosystem I supercomplex of cyanobacteria.</title>
        <authorList>
            <person name="Watanabe M."/>
            <person name="Semchonok D.A."/>
            <person name="Webber-Birungi M.T."/>
            <person name="Ehira S."/>
            <person name="Kondo K."/>
            <person name="Narikawa R."/>
            <person name="Ohmori M."/>
            <person name="Boekema E.J."/>
            <person name="Ikeuchi M."/>
        </authorList>
    </citation>
    <scope>PROTEIN SEQUENCE OF 2-28</scope>
    <scope>SUBUNIT</scope>
    <scope>SUBCELLULAR LOCATION</scope>
    <source>
        <strain>PCC 7120 / SAG 25.82 / UTEX 2576</strain>
    </source>
</reference>
<proteinExistence type="evidence at protein level"/>
<accession>P58577</accession>